<comment type="function">
    <text evidence="1">Part of the ABC transporter complex LolCDE involved in the translocation of mature outer membrane-directed lipoproteins, from the inner membrane to the periplasmic chaperone, LolA. Responsible for the formation of the LolA-lipoprotein complex in an ATP-dependent manner.</text>
</comment>
<comment type="subunit">
    <text evidence="1">The complex is composed of two ATP-binding proteins (LolD) and two transmembrane proteins (LolC and LolE).</text>
</comment>
<comment type="subcellular location">
    <subcellularLocation>
        <location evidence="1">Cell inner membrane</location>
        <topology evidence="1">Peripheral membrane protein</topology>
    </subcellularLocation>
</comment>
<comment type="similarity">
    <text evidence="1">Belongs to the ABC transporter superfamily. Lipoprotein translocase (TC 3.A.1.125) family.</text>
</comment>
<sequence>MNNGILLNCQNLTKDYIEGSVTTRVLKDVTFSMNDKELVAIVGSSGSGKSTLLHTLGGLDQPTSGEVFIKGKSLQKASQDELAKLRNTYLGFVYQFHHLMADFTALENVLMPMLIGNQNKTEAKDRAEKMLNAVGLSHRITHKPSALSGGERQRVAIARALVNNPALVLADEPTGNLDHKTTESIFELIQQLNEDQGIAFLLVTHDLNLAEKLNRRLIMQDGVLRPEM</sequence>
<feature type="chain" id="PRO_0000272103" description="Lipoprotein-releasing system ATP-binding protein LolD">
    <location>
        <begin position="1"/>
        <end position="228"/>
    </location>
</feature>
<feature type="domain" description="ABC transporter" evidence="1">
    <location>
        <begin position="7"/>
        <end position="228"/>
    </location>
</feature>
<feature type="binding site" evidence="1">
    <location>
        <begin position="43"/>
        <end position="50"/>
    </location>
    <ligand>
        <name>ATP</name>
        <dbReference type="ChEBI" id="CHEBI:30616"/>
    </ligand>
</feature>
<proteinExistence type="inferred from homology"/>
<evidence type="ECO:0000255" key="1">
    <source>
        <dbReference type="HAMAP-Rule" id="MF_01708"/>
    </source>
</evidence>
<gene>
    <name evidence="1" type="primary">lolD</name>
    <name type="ordered locus">MS1186</name>
</gene>
<reference key="1">
    <citation type="journal article" date="2004" name="Nat. Biotechnol.">
        <title>The genome sequence of the capnophilic rumen bacterium Mannheimia succiniciproducens.</title>
        <authorList>
            <person name="Hong S.H."/>
            <person name="Kim J.S."/>
            <person name="Lee S.Y."/>
            <person name="In Y.H."/>
            <person name="Choi S.S."/>
            <person name="Rih J.-K."/>
            <person name="Kim C.H."/>
            <person name="Jeong H."/>
            <person name="Hur C.G."/>
            <person name="Kim J.J."/>
        </authorList>
    </citation>
    <scope>NUCLEOTIDE SEQUENCE [LARGE SCALE GENOMIC DNA]</scope>
    <source>
        <strain>KCTC 0769BP / MBEL55E</strain>
    </source>
</reference>
<protein>
    <recommendedName>
        <fullName evidence="1">Lipoprotein-releasing system ATP-binding protein LolD</fullName>
        <ecNumber evidence="1">7.6.2.-</ecNumber>
    </recommendedName>
</protein>
<organism>
    <name type="scientific">Mannheimia succiniciproducens (strain KCTC 0769BP / MBEL55E)</name>
    <dbReference type="NCBI Taxonomy" id="221988"/>
    <lineage>
        <taxon>Bacteria</taxon>
        <taxon>Pseudomonadati</taxon>
        <taxon>Pseudomonadota</taxon>
        <taxon>Gammaproteobacteria</taxon>
        <taxon>Pasteurellales</taxon>
        <taxon>Pasteurellaceae</taxon>
        <taxon>Basfia</taxon>
    </lineage>
</organism>
<accession>Q65TB7</accession>
<name>LOLD_MANSM</name>
<dbReference type="EC" id="7.6.2.-" evidence="1"/>
<dbReference type="EMBL" id="AE016827">
    <property type="protein sequence ID" value="AAU37793.1"/>
    <property type="molecule type" value="Genomic_DNA"/>
</dbReference>
<dbReference type="RefSeq" id="WP_011200360.1">
    <property type="nucleotide sequence ID" value="NC_006300.1"/>
</dbReference>
<dbReference type="SMR" id="Q65TB7"/>
<dbReference type="STRING" id="221988.MS1186"/>
<dbReference type="KEGG" id="msu:MS1186"/>
<dbReference type="eggNOG" id="COG1136">
    <property type="taxonomic scope" value="Bacteria"/>
</dbReference>
<dbReference type="HOGENOM" id="CLU_000604_1_22_6"/>
<dbReference type="OrthoDB" id="9801477at2"/>
<dbReference type="Proteomes" id="UP000000607">
    <property type="component" value="Chromosome"/>
</dbReference>
<dbReference type="GO" id="GO:0005886">
    <property type="term" value="C:plasma membrane"/>
    <property type="evidence" value="ECO:0007669"/>
    <property type="project" value="UniProtKB-SubCell"/>
</dbReference>
<dbReference type="GO" id="GO:0005524">
    <property type="term" value="F:ATP binding"/>
    <property type="evidence" value="ECO:0007669"/>
    <property type="project" value="UniProtKB-KW"/>
</dbReference>
<dbReference type="GO" id="GO:0016887">
    <property type="term" value="F:ATP hydrolysis activity"/>
    <property type="evidence" value="ECO:0007669"/>
    <property type="project" value="InterPro"/>
</dbReference>
<dbReference type="GO" id="GO:0022857">
    <property type="term" value="F:transmembrane transporter activity"/>
    <property type="evidence" value="ECO:0007669"/>
    <property type="project" value="TreeGrafter"/>
</dbReference>
<dbReference type="GO" id="GO:0044874">
    <property type="term" value="P:lipoprotein localization to outer membrane"/>
    <property type="evidence" value="ECO:0007669"/>
    <property type="project" value="TreeGrafter"/>
</dbReference>
<dbReference type="GO" id="GO:0089705">
    <property type="term" value="P:protein localization to outer membrane"/>
    <property type="evidence" value="ECO:0007669"/>
    <property type="project" value="TreeGrafter"/>
</dbReference>
<dbReference type="CDD" id="cd03255">
    <property type="entry name" value="ABC_MJ0796_LolCDE_FtsE"/>
    <property type="match status" value="1"/>
</dbReference>
<dbReference type="FunFam" id="3.40.50.300:FF:000230">
    <property type="entry name" value="Lipoprotein-releasing system ATP-binding protein LolD"/>
    <property type="match status" value="1"/>
</dbReference>
<dbReference type="Gene3D" id="3.40.50.300">
    <property type="entry name" value="P-loop containing nucleotide triphosphate hydrolases"/>
    <property type="match status" value="1"/>
</dbReference>
<dbReference type="InterPro" id="IPR003593">
    <property type="entry name" value="AAA+_ATPase"/>
</dbReference>
<dbReference type="InterPro" id="IPR003439">
    <property type="entry name" value="ABC_transporter-like_ATP-bd"/>
</dbReference>
<dbReference type="InterPro" id="IPR017871">
    <property type="entry name" value="ABC_transporter-like_CS"/>
</dbReference>
<dbReference type="InterPro" id="IPR015854">
    <property type="entry name" value="ABC_transpr_LolD-like"/>
</dbReference>
<dbReference type="InterPro" id="IPR011924">
    <property type="entry name" value="LolD_lipo_ATP-bd"/>
</dbReference>
<dbReference type="InterPro" id="IPR017911">
    <property type="entry name" value="MacB-like_ATP-bd"/>
</dbReference>
<dbReference type="InterPro" id="IPR027417">
    <property type="entry name" value="P-loop_NTPase"/>
</dbReference>
<dbReference type="NCBIfam" id="TIGR02211">
    <property type="entry name" value="LolD_lipo_ex"/>
    <property type="match status" value="1"/>
</dbReference>
<dbReference type="PANTHER" id="PTHR24220">
    <property type="entry name" value="IMPORT ATP-BINDING PROTEIN"/>
    <property type="match status" value="1"/>
</dbReference>
<dbReference type="PANTHER" id="PTHR24220:SF689">
    <property type="entry name" value="LIPOPROTEIN-RELEASING SYSTEM ATP-BINDING PROTEIN LOLD"/>
    <property type="match status" value="1"/>
</dbReference>
<dbReference type="Pfam" id="PF00005">
    <property type="entry name" value="ABC_tran"/>
    <property type="match status" value="1"/>
</dbReference>
<dbReference type="SMART" id="SM00382">
    <property type="entry name" value="AAA"/>
    <property type="match status" value="1"/>
</dbReference>
<dbReference type="SUPFAM" id="SSF52540">
    <property type="entry name" value="P-loop containing nucleoside triphosphate hydrolases"/>
    <property type="match status" value="1"/>
</dbReference>
<dbReference type="PROSITE" id="PS00211">
    <property type="entry name" value="ABC_TRANSPORTER_1"/>
    <property type="match status" value="1"/>
</dbReference>
<dbReference type="PROSITE" id="PS50893">
    <property type="entry name" value="ABC_TRANSPORTER_2"/>
    <property type="match status" value="1"/>
</dbReference>
<dbReference type="PROSITE" id="PS51244">
    <property type="entry name" value="LOLD"/>
    <property type="match status" value="1"/>
</dbReference>
<keyword id="KW-0067">ATP-binding</keyword>
<keyword id="KW-0997">Cell inner membrane</keyword>
<keyword id="KW-1003">Cell membrane</keyword>
<keyword id="KW-0472">Membrane</keyword>
<keyword id="KW-0547">Nucleotide-binding</keyword>
<keyword id="KW-1278">Translocase</keyword>
<keyword id="KW-0813">Transport</keyword>